<name>Y6689_MYXXD</name>
<sequence length="390" mass="41860">MRRILYLEPVGGIAGDMFLAAGLDLGISPAELERALSGLRVPGWKLAVSRAVRHAISGTHLDVVLDAREAHPHRAYADIRRLIEEADTLPPRAKERALAVFRAIGEAEAKVHGVSIDDIHFHEVGAVDSIVDICGAAVVLELLGNPEVHAAPPPLGSGTIRVAHGAMPIPVPATLELLRDVPVRFEGVGELTTPTGAALLKVLAHIGHPPDFIVEKVGYGVGTKDFKDRPNVLRASLGRLEQASNEGLWVVEANLDDATPQLLGHLLERLLAVGALDAWVTPVVMKKSRPGHLLSALVEGGTREAIVDVVLRESTTLGVRYHRVERQALERDWVEVETPWGKVRVKRGLRQGAVLNAHPEFEDCRQVAEAAGVPVKQVMAAAVAALGPKD</sequence>
<evidence type="ECO:0000255" key="1">
    <source>
        <dbReference type="HAMAP-Rule" id="MF_01074"/>
    </source>
</evidence>
<evidence type="ECO:0000305" key="2"/>
<gene>
    <name type="ordered locus">MXAN_6689</name>
</gene>
<comment type="similarity">
    <text evidence="1">Belongs to the LarC family.</text>
</comment>
<comment type="sequence caution" evidence="2">
    <conflict type="erroneous initiation">
        <sequence resource="EMBL-CDS" id="ABF89710"/>
    </conflict>
</comment>
<protein>
    <recommendedName>
        <fullName evidence="1">Putative nickel insertion protein</fullName>
    </recommendedName>
</protein>
<accession>Q8VQZ3</accession>
<accession>Q1CXR7</accession>
<reference key="1">
    <citation type="journal article" date="2002" name="J. Bacteriol.">
        <title>Mapping of Myxococcus xanthus social motility dsp mutations to the dif genes.</title>
        <authorList>
            <person name="Lancero H."/>
            <person name="Brofft J.E."/>
            <person name="Downard J."/>
            <person name="Birren B.W."/>
            <person name="Nusbaum C."/>
            <person name="Naylor J."/>
            <person name="Shi W."/>
            <person name="Shimkets L.J."/>
        </authorList>
    </citation>
    <scope>NUCLEOTIDE SEQUENCE [GENOMIC DNA]</scope>
</reference>
<reference key="2">
    <citation type="journal article" date="2006" name="Proc. Natl. Acad. Sci. U.S.A.">
        <title>Evolution of sensory complexity recorded in a myxobacterial genome.</title>
        <authorList>
            <person name="Goldman B.S."/>
            <person name="Nierman W.C."/>
            <person name="Kaiser D."/>
            <person name="Slater S.C."/>
            <person name="Durkin A.S."/>
            <person name="Eisen J.A."/>
            <person name="Ronning C.M."/>
            <person name="Barbazuk W.B."/>
            <person name="Blanchard M."/>
            <person name="Field C."/>
            <person name="Halling C."/>
            <person name="Hinkle G."/>
            <person name="Iartchuk O."/>
            <person name="Kim H.S."/>
            <person name="Mackenzie C."/>
            <person name="Madupu R."/>
            <person name="Miller N."/>
            <person name="Shvartsbeyn A."/>
            <person name="Sullivan S.A."/>
            <person name="Vaudin M."/>
            <person name="Wiegand R."/>
            <person name="Kaplan H.B."/>
        </authorList>
    </citation>
    <scope>NUCLEOTIDE SEQUENCE [LARGE SCALE GENOMIC DNA]</scope>
    <source>
        <strain>DK1622</strain>
    </source>
</reference>
<dbReference type="EMBL" id="AF449411">
    <property type="protein sequence ID" value="AAL56586.1"/>
    <property type="molecule type" value="Genomic_DNA"/>
</dbReference>
<dbReference type="EMBL" id="CP000113">
    <property type="protein sequence ID" value="ABF89710.1"/>
    <property type="status" value="ALT_INIT"/>
    <property type="molecule type" value="Genomic_DNA"/>
</dbReference>
<dbReference type="RefSeq" id="WP_026113867.1">
    <property type="nucleotide sequence ID" value="NC_008095.1"/>
</dbReference>
<dbReference type="SMR" id="Q8VQZ3"/>
<dbReference type="STRING" id="246197.MXAN_6689"/>
<dbReference type="EnsemblBacteria" id="ABF89710">
    <property type="protein sequence ID" value="ABF89710"/>
    <property type="gene ID" value="MXAN_6689"/>
</dbReference>
<dbReference type="GeneID" id="41363882"/>
<dbReference type="KEGG" id="mxa:MXAN_6689"/>
<dbReference type="eggNOG" id="COG1641">
    <property type="taxonomic scope" value="Bacteria"/>
</dbReference>
<dbReference type="HOGENOM" id="CLU_028523_2_1_7"/>
<dbReference type="Proteomes" id="UP000002402">
    <property type="component" value="Chromosome"/>
</dbReference>
<dbReference type="GO" id="GO:0016829">
    <property type="term" value="F:lyase activity"/>
    <property type="evidence" value="ECO:0007669"/>
    <property type="project" value="UniProtKB-UniRule"/>
</dbReference>
<dbReference type="GO" id="GO:0016151">
    <property type="term" value="F:nickel cation binding"/>
    <property type="evidence" value="ECO:0007669"/>
    <property type="project" value="UniProtKB-UniRule"/>
</dbReference>
<dbReference type="Gene3D" id="3.10.20.300">
    <property type="entry name" value="mk0293 like domain"/>
    <property type="match status" value="1"/>
</dbReference>
<dbReference type="Gene3D" id="3.30.70.1380">
    <property type="entry name" value="Transcriptional regulatory protein pf0864 domain like"/>
    <property type="match status" value="1"/>
</dbReference>
<dbReference type="HAMAP" id="MF_01074">
    <property type="entry name" value="LarC"/>
    <property type="match status" value="1"/>
</dbReference>
<dbReference type="InterPro" id="IPR002822">
    <property type="entry name" value="Ni_insertion"/>
</dbReference>
<dbReference type="NCBIfam" id="TIGR00299">
    <property type="entry name" value="nickel pincer cofactor biosynthesis protein LarC"/>
    <property type="match status" value="1"/>
</dbReference>
<dbReference type="PANTHER" id="PTHR36566">
    <property type="entry name" value="NICKEL INSERTION PROTEIN-RELATED"/>
    <property type="match status" value="1"/>
</dbReference>
<dbReference type="PANTHER" id="PTHR36566:SF1">
    <property type="entry name" value="PYRIDINIUM-3,5-BISTHIOCARBOXYLIC ACID MONONUCLEOTIDE NICKEL INSERTION PROTEIN"/>
    <property type="match status" value="1"/>
</dbReference>
<dbReference type="Pfam" id="PF01969">
    <property type="entry name" value="Ni_insertion"/>
    <property type="match status" value="1"/>
</dbReference>
<proteinExistence type="inferred from homology"/>
<keyword id="KW-0533">Nickel</keyword>
<keyword id="KW-1185">Reference proteome</keyword>
<feature type="chain" id="PRO_0000146849" description="Putative nickel insertion protein">
    <location>
        <begin position="1"/>
        <end position="390"/>
    </location>
</feature>
<organism>
    <name type="scientific">Myxococcus xanthus (strain DK1622)</name>
    <dbReference type="NCBI Taxonomy" id="246197"/>
    <lineage>
        <taxon>Bacteria</taxon>
        <taxon>Pseudomonadati</taxon>
        <taxon>Myxococcota</taxon>
        <taxon>Myxococcia</taxon>
        <taxon>Myxococcales</taxon>
        <taxon>Cystobacterineae</taxon>
        <taxon>Myxococcaceae</taxon>
        <taxon>Myxococcus</taxon>
    </lineage>
</organism>